<keyword id="KW-0326">Glycosidase</keyword>
<keyword id="KW-0378">Hydrolase</keyword>
<keyword id="KW-0732">Signal</keyword>
<proteinExistence type="evidence at transcript level"/>
<protein>
    <recommendedName>
        <fullName>Putative beta-galactosidase</fullName>
        <shortName>Lactase</shortName>
        <ecNumber>3.2.1.23</ecNumber>
    </recommendedName>
    <alternativeName>
        <fullName>SR12 protein</fullName>
    </alternativeName>
</protein>
<name>BGAL_DIACA</name>
<evidence type="ECO:0000255" key="1"/>
<evidence type="ECO:0000305" key="2"/>
<sequence length="731" mass="82864">MLCGKENNVMKMMLVYVFVLITLISCVYGNVWYDYRAIKINDQRRILLSGSIHYPRSTPEMWPDIIEKAKDSQLDVIQTYVFWNGHEPSEGKYYFEGRYDLVKFIKLIHQAGLFVHLRIGPFACAEWNFGGFPVWLKYVPGIEFRTDNGPFKEKMQVFTTKIVDMMKAEKLFHWQGGPIILNQIENEYGPVEWEIGAPGKAYTHWAAQMAQSLNAGVPWIMCKQDSDVPDNVIDTCNGFYCEGFVPKDKSKPKMWTENWTGWYTEYGKPVPYRPAEDVAFSVARFIQNGGSFMNYYMFHGGTNFETTAGRFVSTSYDYDAPLDEYGLPREPKYTHLKNLHKAIKMCEPALVSSDAKVTNLGSNQEAHVYSSNSGSCAAFLANYDPKWSVKVTFSGMEFELPAWSISILPDCKKEVYNTARVNEPSPKLHSKMTPVISNLNWQSYSDEVPTADSPGTFREKKLYEQINMTWDKSDYLWYMTDVVLDGNEGFLKKGDEPWLTVNSAGHVLHVFVNGQLQGHAYGSLAKPQLTFSQKVKMTAGVNRISLLSAVVGLANVGWHFERYNQGVLGPVTLSGLNEGTRDLTWQYWSYKIGTKGEEQQVYNSGGSSHVQWGPPAWKQPLVWYKTTFDAPGGNDPLALDLGSMGKGQAWINGQSIGRHWSNNIAKGSCNDNCNYAGTYTETKCLSDCGKSSQKWYHVPRSWLQPRGNLLVVFEEWGGDTKWVSLVKRTIA</sequence>
<gene>
    <name type="primary">CARSR12</name>
</gene>
<accession>Q00662</accession>
<comment type="catalytic activity">
    <reaction>
        <text>Hydrolysis of terminal non-reducing beta-D-galactose residues in beta-D-galactosides.</text>
        <dbReference type="EC" id="3.2.1.23"/>
    </reaction>
</comment>
<comment type="tissue specificity">
    <text>Senescing flower petals.</text>
</comment>
<comment type="induction">
    <text>By ethylene.</text>
</comment>
<comment type="similarity">
    <text evidence="2">Belongs to the glycosyl hydrolase 35 family.</text>
</comment>
<organism>
    <name type="scientific">Dianthus caryophyllus</name>
    <name type="common">Carnation</name>
    <name type="synonym">Clove pink</name>
    <dbReference type="NCBI Taxonomy" id="3570"/>
    <lineage>
        <taxon>Eukaryota</taxon>
        <taxon>Viridiplantae</taxon>
        <taxon>Streptophyta</taxon>
        <taxon>Embryophyta</taxon>
        <taxon>Tracheophyta</taxon>
        <taxon>Spermatophyta</taxon>
        <taxon>Magnoliopsida</taxon>
        <taxon>eudicotyledons</taxon>
        <taxon>Gunneridae</taxon>
        <taxon>Pentapetalae</taxon>
        <taxon>Caryophyllales</taxon>
        <taxon>Caryophyllaceae</taxon>
        <taxon>Caryophylleae</taxon>
        <taxon>Dianthus</taxon>
    </lineage>
</organism>
<feature type="signal peptide" evidence="1">
    <location>
        <begin position="1"/>
        <end position="29"/>
    </location>
</feature>
<feature type="chain" id="PRO_0000012196" description="Putative beta-galactosidase">
    <location>
        <begin position="30"/>
        <end position="731"/>
    </location>
</feature>
<feature type="active site" description="Proton donor" evidence="1">
    <location>
        <position position="187"/>
    </location>
</feature>
<feature type="active site" description="Nucleophile" evidence="1">
    <location>
        <position position="257"/>
    </location>
</feature>
<dbReference type="EC" id="3.2.1.23"/>
<dbReference type="EMBL" id="X57171">
    <property type="protein sequence ID" value="CAA40459.1"/>
    <property type="molecule type" value="Genomic_DNA"/>
</dbReference>
<dbReference type="PIR" id="S16595">
    <property type="entry name" value="S16595"/>
</dbReference>
<dbReference type="SMR" id="Q00662"/>
<dbReference type="CAZy" id="GH35">
    <property type="family name" value="Glycoside Hydrolase Family 35"/>
</dbReference>
<dbReference type="GO" id="GO:0004565">
    <property type="term" value="F:beta-galactosidase activity"/>
    <property type="evidence" value="ECO:0007669"/>
    <property type="project" value="UniProtKB-EC"/>
</dbReference>
<dbReference type="GO" id="GO:0005975">
    <property type="term" value="P:carbohydrate metabolic process"/>
    <property type="evidence" value="ECO:0007669"/>
    <property type="project" value="InterPro"/>
</dbReference>
<dbReference type="FunFam" id="2.60.120.260:FF:000061">
    <property type="entry name" value="Beta-galactosidase"/>
    <property type="match status" value="1"/>
</dbReference>
<dbReference type="FunFam" id="2.60.120.260:FF:000076">
    <property type="entry name" value="Beta-galactosidase"/>
    <property type="match status" value="1"/>
</dbReference>
<dbReference type="FunFam" id="2.60.120.260:FF:000142">
    <property type="entry name" value="Beta-galactosidase"/>
    <property type="match status" value="1"/>
</dbReference>
<dbReference type="FunFam" id="3.20.20.80:FF:000006">
    <property type="entry name" value="Beta-galactosidase"/>
    <property type="match status" value="1"/>
</dbReference>
<dbReference type="Gene3D" id="2.60.120.260">
    <property type="entry name" value="Galactose-binding domain-like"/>
    <property type="match status" value="2"/>
</dbReference>
<dbReference type="Gene3D" id="3.20.20.80">
    <property type="entry name" value="Glycosidases"/>
    <property type="match status" value="1"/>
</dbReference>
<dbReference type="InterPro" id="IPR048913">
    <property type="entry name" value="BetaGal_gal-bd"/>
</dbReference>
<dbReference type="InterPro" id="IPR008979">
    <property type="entry name" value="Galactose-bd-like_sf"/>
</dbReference>
<dbReference type="InterPro" id="IPR041392">
    <property type="entry name" value="GHD"/>
</dbReference>
<dbReference type="InterPro" id="IPR031330">
    <property type="entry name" value="Gly_Hdrlase_35_cat"/>
</dbReference>
<dbReference type="InterPro" id="IPR019801">
    <property type="entry name" value="Glyco_hydro_35_CS"/>
</dbReference>
<dbReference type="InterPro" id="IPR001944">
    <property type="entry name" value="Glycoside_Hdrlase_35"/>
</dbReference>
<dbReference type="InterPro" id="IPR017853">
    <property type="entry name" value="Glycoside_hydrolase_SF"/>
</dbReference>
<dbReference type="PANTHER" id="PTHR23421">
    <property type="entry name" value="BETA-GALACTOSIDASE RELATED"/>
    <property type="match status" value="1"/>
</dbReference>
<dbReference type="Pfam" id="PF21467">
    <property type="entry name" value="BetaGal_gal-bd"/>
    <property type="match status" value="2"/>
</dbReference>
<dbReference type="Pfam" id="PF17834">
    <property type="entry name" value="GHD"/>
    <property type="match status" value="1"/>
</dbReference>
<dbReference type="Pfam" id="PF01301">
    <property type="entry name" value="Glyco_hydro_35"/>
    <property type="match status" value="1"/>
</dbReference>
<dbReference type="PRINTS" id="PR00742">
    <property type="entry name" value="GLHYDRLASE35"/>
</dbReference>
<dbReference type="SUPFAM" id="SSF51445">
    <property type="entry name" value="(Trans)glycosidases"/>
    <property type="match status" value="1"/>
</dbReference>
<dbReference type="SUPFAM" id="SSF49785">
    <property type="entry name" value="Galactose-binding domain-like"/>
    <property type="match status" value="2"/>
</dbReference>
<dbReference type="PROSITE" id="PS01182">
    <property type="entry name" value="GLYCOSYL_HYDROL_F35"/>
    <property type="match status" value="1"/>
</dbReference>
<reference key="1">
    <citation type="journal article" date="1991" name="Plant Mol. Biol.">
        <title>Characterization of an ethylene-regulated flower senescence-related gene from carnation.</title>
        <authorList>
            <person name="Raghothama K.G."/>
            <person name="Lawton K.A."/>
            <person name="Goldsbrough P.B."/>
            <person name="Woodson W.R."/>
        </authorList>
    </citation>
    <scope>NUCLEOTIDE SEQUENCE [GENOMIC DNA]</scope>
    <source>
        <strain>cv. White Sim</strain>
        <tissue>Petal</tissue>
    </source>
</reference>